<protein>
    <recommendedName>
        <fullName>Putative uncharacterized protein YPR123C</fullName>
    </recommendedName>
</protein>
<proteinExistence type="uncertain"/>
<reference key="1">
    <citation type="journal article" date="1997" name="Nature">
        <title>The nucleotide sequence of Saccharomyces cerevisiae chromosome XVI.</title>
        <authorList>
            <person name="Bussey H."/>
            <person name="Storms R.K."/>
            <person name="Ahmed A."/>
            <person name="Albermann K."/>
            <person name="Allen E."/>
            <person name="Ansorge W."/>
            <person name="Araujo R."/>
            <person name="Aparicio A."/>
            <person name="Barrell B.G."/>
            <person name="Badcock K."/>
            <person name="Benes V."/>
            <person name="Botstein D."/>
            <person name="Bowman S."/>
            <person name="Brueckner M."/>
            <person name="Carpenter J."/>
            <person name="Cherry J.M."/>
            <person name="Chung E."/>
            <person name="Churcher C.M."/>
            <person name="Coster F."/>
            <person name="Davis K."/>
            <person name="Davis R.W."/>
            <person name="Dietrich F.S."/>
            <person name="Delius H."/>
            <person name="DiPaolo T."/>
            <person name="Dubois E."/>
            <person name="Duesterhoeft A."/>
            <person name="Duncan M."/>
            <person name="Floeth M."/>
            <person name="Fortin N."/>
            <person name="Friesen J.D."/>
            <person name="Fritz C."/>
            <person name="Goffeau A."/>
            <person name="Hall J."/>
            <person name="Hebling U."/>
            <person name="Heumann K."/>
            <person name="Hilbert H."/>
            <person name="Hillier L.W."/>
            <person name="Hunicke-Smith S."/>
            <person name="Hyman R.W."/>
            <person name="Johnston M."/>
            <person name="Kalman S."/>
            <person name="Kleine K."/>
            <person name="Komp C."/>
            <person name="Kurdi O."/>
            <person name="Lashkari D."/>
            <person name="Lew H."/>
            <person name="Lin A."/>
            <person name="Lin D."/>
            <person name="Louis E.J."/>
            <person name="Marathe R."/>
            <person name="Messenguy F."/>
            <person name="Mewes H.-W."/>
            <person name="Mirtipati S."/>
            <person name="Moestl D."/>
            <person name="Mueller-Auer S."/>
            <person name="Namath A."/>
            <person name="Nentwich U."/>
            <person name="Oefner P."/>
            <person name="Pearson D."/>
            <person name="Petel F.X."/>
            <person name="Pohl T.M."/>
            <person name="Purnelle B."/>
            <person name="Rajandream M.A."/>
            <person name="Rechmann S."/>
            <person name="Rieger M."/>
            <person name="Riles L."/>
            <person name="Roberts D."/>
            <person name="Schaefer M."/>
            <person name="Scharfe M."/>
            <person name="Scherens B."/>
            <person name="Schramm S."/>
            <person name="Schroeder M."/>
            <person name="Sdicu A.-M."/>
            <person name="Tettelin H."/>
            <person name="Urrestarazu L.A."/>
            <person name="Ushinsky S."/>
            <person name="Vierendeels F."/>
            <person name="Vissers S."/>
            <person name="Voss H."/>
            <person name="Walsh S.V."/>
            <person name="Wambutt R."/>
            <person name="Wang Y."/>
            <person name="Wedler E."/>
            <person name="Wedler H."/>
            <person name="Winnett E."/>
            <person name="Zhong W.-W."/>
            <person name="Zollner A."/>
            <person name="Vo D.H."/>
            <person name="Hani J."/>
        </authorList>
    </citation>
    <scope>NUCLEOTIDE SEQUENCE [LARGE SCALE GENOMIC DNA]</scope>
    <source>
        <strain>ATCC 204508 / S288c</strain>
    </source>
</reference>
<reference key="2">
    <citation type="journal article" date="2014" name="G3 (Bethesda)">
        <title>The reference genome sequence of Saccharomyces cerevisiae: Then and now.</title>
        <authorList>
            <person name="Engel S.R."/>
            <person name="Dietrich F.S."/>
            <person name="Fisk D.G."/>
            <person name="Binkley G."/>
            <person name="Balakrishnan R."/>
            <person name="Costanzo M.C."/>
            <person name="Dwight S.S."/>
            <person name="Hitz B.C."/>
            <person name="Karra K."/>
            <person name="Nash R.S."/>
            <person name="Weng S."/>
            <person name="Wong E.D."/>
            <person name="Lloyd P."/>
            <person name="Skrzypek M.S."/>
            <person name="Miyasato S.R."/>
            <person name="Simison M."/>
            <person name="Cherry J.M."/>
        </authorList>
    </citation>
    <scope>GENOME REANNOTATION</scope>
    <source>
        <strain>ATCC 204508 / S288c</strain>
    </source>
</reference>
<reference key="3">
    <citation type="journal article" date="2007" name="Genome Res.">
        <title>Approaching a complete repository of sequence-verified protein-encoding clones for Saccharomyces cerevisiae.</title>
        <authorList>
            <person name="Hu Y."/>
            <person name="Rolfs A."/>
            <person name="Bhullar B."/>
            <person name="Murthy T.V.S."/>
            <person name="Zhu C."/>
            <person name="Berger M.F."/>
            <person name="Camargo A.A."/>
            <person name="Kelley F."/>
            <person name="McCarron S."/>
            <person name="Jepson D."/>
            <person name="Richardson A."/>
            <person name="Raphael J."/>
            <person name="Moreira D."/>
            <person name="Taycher E."/>
            <person name="Zuo D."/>
            <person name="Mohr S."/>
            <person name="Kane M.F."/>
            <person name="Williamson J."/>
            <person name="Simpson A.J.G."/>
            <person name="Bulyk M.L."/>
            <person name="Harlow E."/>
            <person name="Marsischky G."/>
            <person name="Kolodner R.D."/>
            <person name="LaBaer J."/>
        </authorList>
    </citation>
    <scope>NUCLEOTIDE SEQUENCE [GENOMIC DNA]</scope>
    <source>
        <strain>ATCC 204508 / S288c</strain>
    </source>
</reference>
<evidence type="ECO:0000255" key="1"/>
<evidence type="ECO:0000305" key="2"/>
<evidence type="ECO:0000305" key="3">
    <source>
    </source>
</evidence>
<gene>
    <name type="ordered locus">YPR123C</name>
    <name type="ORF">P9642.4B</name>
</gene>
<dbReference type="EMBL" id="U40828">
    <property type="protein sequence ID" value="AAB68067.1"/>
    <property type="molecule type" value="Genomic_DNA"/>
</dbReference>
<dbReference type="EMBL" id="AY693276">
    <property type="protein sequence ID" value="AAT93295.1"/>
    <property type="molecule type" value="Genomic_DNA"/>
</dbReference>
<dbReference type="PIR" id="S69462">
    <property type="entry name" value="S69462"/>
</dbReference>
<dbReference type="DIP" id="DIP-3811N"/>
<dbReference type="STRING" id="4932.YPR123C"/>
<dbReference type="PaxDb" id="4932-YPR123C"/>
<dbReference type="EnsemblFungi" id="YPR123C_mRNA">
    <property type="protein sequence ID" value="YPR123C"/>
    <property type="gene ID" value="YPR123C"/>
</dbReference>
<dbReference type="AGR" id="SGD:S000006327"/>
<dbReference type="SGD" id="S000006327">
    <property type="gene designation" value="YPR123C"/>
</dbReference>
<dbReference type="HOGENOM" id="CLU_1797961_0_0_1"/>
<dbReference type="GO" id="GO:0016020">
    <property type="term" value="C:membrane"/>
    <property type="evidence" value="ECO:0007669"/>
    <property type="project" value="UniProtKB-SubCell"/>
</dbReference>
<sequence>MSISIPEELLLSDDDIPDMPDMLESEVVCALAELVGVLLIDIDIPDIELLPIDILAIDDIVDANVLLALDIASMLIDDMLDNIVLLALDIASMLIDAILDATVLDALDMASIFMLLPIFIPSILNVKYNTLFFIFYSILPTNVI</sequence>
<accession>O13566</accession>
<feature type="chain" id="PRO_0000299825" description="Putative uncharacterized protein YPR123C">
    <location>
        <begin position="1"/>
        <end position="144"/>
    </location>
</feature>
<feature type="transmembrane region" description="Helical" evidence="1">
    <location>
        <begin position="27"/>
        <end position="47"/>
    </location>
</feature>
<feature type="transmembrane region" description="Helical" evidence="1">
    <location>
        <begin position="49"/>
        <end position="69"/>
    </location>
</feature>
<feature type="transmembrane region" description="Helical" evidence="1">
    <location>
        <begin position="83"/>
        <end position="103"/>
    </location>
</feature>
<feature type="transmembrane region" description="Helical" evidence="1">
    <location>
        <begin position="106"/>
        <end position="126"/>
    </location>
</feature>
<name>YP123_YEAST</name>
<comment type="subcellular location">
    <subcellularLocation>
        <location evidence="2">Membrane</location>
        <topology evidence="2">Multi-pass membrane protein</topology>
    </subcellularLocation>
</comment>
<comment type="miscellaneous">
    <text evidence="2">Almost completely overlaps CTR1.</text>
</comment>
<comment type="caution">
    <text evidence="3">Product of a dubious gene prediction unlikely to encode a functional protein. Because of that it is not part of the S.cerevisiae S288c complete/reference proteome set.</text>
</comment>
<keyword id="KW-0472">Membrane</keyword>
<keyword id="KW-0812">Transmembrane</keyword>
<keyword id="KW-1133">Transmembrane helix</keyword>
<organism>
    <name type="scientific">Saccharomyces cerevisiae (strain ATCC 204508 / S288c)</name>
    <name type="common">Baker's yeast</name>
    <dbReference type="NCBI Taxonomy" id="559292"/>
    <lineage>
        <taxon>Eukaryota</taxon>
        <taxon>Fungi</taxon>
        <taxon>Dikarya</taxon>
        <taxon>Ascomycota</taxon>
        <taxon>Saccharomycotina</taxon>
        <taxon>Saccharomycetes</taxon>
        <taxon>Saccharomycetales</taxon>
        <taxon>Saccharomycetaceae</taxon>
        <taxon>Saccharomyces</taxon>
    </lineage>
</organism>